<proteinExistence type="inferred from homology"/>
<feature type="chain" id="PRO_1000009153" description="Hydroxylamine reductase">
    <location>
        <begin position="1"/>
        <end position="550"/>
    </location>
</feature>
<feature type="binding site" evidence="1">
    <location>
        <position position="3"/>
    </location>
    <ligand>
        <name>[2Fe-2S] cluster</name>
        <dbReference type="ChEBI" id="CHEBI:190135"/>
    </ligand>
</feature>
<feature type="binding site" evidence="1">
    <location>
        <position position="6"/>
    </location>
    <ligand>
        <name>[2Fe-2S] cluster</name>
        <dbReference type="ChEBI" id="CHEBI:190135"/>
    </ligand>
</feature>
<feature type="binding site" evidence="1">
    <location>
        <position position="18"/>
    </location>
    <ligand>
        <name>[2Fe-2S] cluster</name>
        <dbReference type="ChEBI" id="CHEBI:190135"/>
    </ligand>
</feature>
<feature type="binding site" evidence="1">
    <location>
        <position position="25"/>
    </location>
    <ligand>
        <name>[2Fe-2S] cluster</name>
        <dbReference type="ChEBI" id="CHEBI:190135"/>
    </ligand>
</feature>
<feature type="binding site" evidence="1">
    <location>
        <position position="249"/>
    </location>
    <ligand>
        <name>hybrid [4Fe-2O-2S] cluster</name>
        <dbReference type="ChEBI" id="CHEBI:60519"/>
    </ligand>
</feature>
<feature type="binding site" evidence="1">
    <location>
        <position position="273"/>
    </location>
    <ligand>
        <name>hybrid [4Fe-2O-2S] cluster</name>
        <dbReference type="ChEBI" id="CHEBI:60519"/>
    </ligand>
</feature>
<feature type="binding site" evidence="1">
    <location>
        <position position="317"/>
    </location>
    <ligand>
        <name>hybrid [4Fe-2O-2S] cluster</name>
        <dbReference type="ChEBI" id="CHEBI:60519"/>
    </ligand>
</feature>
<feature type="binding site" description="via persulfide group" evidence="1">
    <location>
        <position position="405"/>
    </location>
    <ligand>
        <name>hybrid [4Fe-2O-2S] cluster</name>
        <dbReference type="ChEBI" id="CHEBI:60519"/>
    </ligand>
</feature>
<feature type="binding site" evidence="1">
    <location>
        <position position="433"/>
    </location>
    <ligand>
        <name>hybrid [4Fe-2O-2S] cluster</name>
        <dbReference type="ChEBI" id="CHEBI:60519"/>
    </ligand>
</feature>
<feature type="binding site" evidence="1">
    <location>
        <position position="458"/>
    </location>
    <ligand>
        <name>hybrid [4Fe-2O-2S] cluster</name>
        <dbReference type="ChEBI" id="CHEBI:60519"/>
    </ligand>
</feature>
<feature type="binding site" evidence="1">
    <location>
        <position position="492"/>
    </location>
    <ligand>
        <name>hybrid [4Fe-2O-2S] cluster</name>
        <dbReference type="ChEBI" id="CHEBI:60519"/>
    </ligand>
</feature>
<feature type="binding site" evidence="1">
    <location>
        <position position="494"/>
    </location>
    <ligand>
        <name>hybrid [4Fe-2O-2S] cluster</name>
        <dbReference type="ChEBI" id="CHEBI:60519"/>
    </ligand>
</feature>
<feature type="modified residue" description="Cysteine persulfide" evidence="1">
    <location>
        <position position="405"/>
    </location>
</feature>
<accession>Q0TJH6</accession>
<protein>
    <recommendedName>
        <fullName evidence="1">Hydroxylamine reductase</fullName>
        <ecNumber evidence="1">1.7.99.1</ecNumber>
    </recommendedName>
    <alternativeName>
        <fullName evidence="1">Hybrid-cluster protein</fullName>
        <shortName evidence="1">HCP</shortName>
    </alternativeName>
    <alternativeName>
        <fullName evidence="1">Prismane protein</fullName>
    </alternativeName>
</protein>
<comment type="function">
    <text evidence="1">Catalyzes the reduction of hydroxylamine to form NH(3) and H(2)O.</text>
</comment>
<comment type="catalytic activity">
    <reaction evidence="1">
        <text>A + NH4(+) + H2O = hydroxylamine + AH2 + H(+)</text>
        <dbReference type="Rhea" id="RHEA:22052"/>
        <dbReference type="ChEBI" id="CHEBI:13193"/>
        <dbReference type="ChEBI" id="CHEBI:15377"/>
        <dbReference type="ChEBI" id="CHEBI:15378"/>
        <dbReference type="ChEBI" id="CHEBI:15429"/>
        <dbReference type="ChEBI" id="CHEBI:17499"/>
        <dbReference type="ChEBI" id="CHEBI:28938"/>
        <dbReference type="EC" id="1.7.99.1"/>
    </reaction>
</comment>
<comment type="cofactor">
    <cofactor evidence="1">
        <name>[2Fe-2S] cluster</name>
        <dbReference type="ChEBI" id="CHEBI:190135"/>
    </cofactor>
    <text evidence="1">Binds 1 [2Fe-2S] cluster.</text>
</comment>
<comment type="cofactor">
    <cofactor evidence="1">
        <name>hybrid [4Fe-2O-2S] cluster</name>
        <dbReference type="ChEBI" id="CHEBI:60519"/>
    </cofactor>
    <text evidence="1">Binds 1 hybrid [4Fe-2O-2S] cluster.</text>
</comment>
<comment type="subcellular location">
    <subcellularLocation>
        <location evidence="1">Cytoplasm</location>
    </subcellularLocation>
</comment>
<comment type="similarity">
    <text evidence="1">Belongs to the HCP family.</text>
</comment>
<organism>
    <name type="scientific">Escherichia coli O6:K15:H31 (strain 536 / UPEC)</name>
    <dbReference type="NCBI Taxonomy" id="362663"/>
    <lineage>
        <taxon>Bacteria</taxon>
        <taxon>Pseudomonadati</taxon>
        <taxon>Pseudomonadota</taxon>
        <taxon>Gammaproteobacteria</taxon>
        <taxon>Enterobacterales</taxon>
        <taxon>Enterobacteriaceae</taxon>
        <taxon>Escherichia</taxon>
    </lineage>
</organism>
<dbReference type="EC" id="1.7.99.1" evidence="1"/>
<dbReference type="EMBL" id="CP000247">
    <property type="protein sequence ID" value="ABG68903.1"/>
    <property type="molecule type" value="Genomic_DNA"/>
</dbReference>
<dbReference type="RefSeq" id="WP_000458842.1">
    <property type="nucleotide sequence ID" value="NC_008253.1"/>
</dbReference>
<dbReference type="SMR" id="Q0TJH6"/>
<dbReference type="KEGG" id="ecp:ECP_0888"/>
<dbReference type="HOGENOM" id="CLU_038344_2_0_6"/>
<dbReference type="Proteomes" id="UP000009182">
    <property type="component" value="Chromosome"/>
</dbReference>
<dbReference type="GO" id="GO:0005737">
    <property type="term" value="C:cytoplasm"/>
    <property type="evidence" value="ECO:0007669"/>
    <property type="project" value="UniProtKB-SubCell"/>
</dbReference>
<dbReference type="GO" id="GO:0051537">
    <property type="term" value="F:2 iron, 2 sulfur cluster binding"/>
    <property type="evidence" value="ECO:0007669"/>
    <property type="project" value="UniProtKB-KW"/>
</dbReference>
<dbReference type="GO" id="GO:0050418">
    <property type="term" value="F:hydroxylamine reductase activity"/>
    <property type="evidence" value="ECO:0007669"/>
    <property type="project" value="UniProtKB-UniRule"/>
</dbReference>
<dbReference type="GO" id="GO:0046872">
    <property type="term" value="F:metal ion binding"/>
    <property type="evidence" value="ECO:0007669"/>
    <property type="project" value="UniProtKB-KW"/>
</dbReference>
<dbReference type="GO" id="GO:0004601">
    <property type="term" value="F:peroxidase activity"/>
    <property type="evidence" value="ECO:0007669"/>
    <property type="project" value="TreeGrafter"/>
</dbReference>
<dbReference type="GO" id="GO:0042542">
    <property type="term" value="P:response to hydrogen peroxide"/>
    <property type="evidence" value="ECO:0007669"/>
    <property type="project" value="TreeGrafter"/>
</dbReference>
<dbReference type="CDD" id="cd01914">
    <property type="entry name" value="HCP"/>
    <property type="match status" value="1"/>
</dbReference>
<dbReference type="FunFam" id="1.20.1270.20:FF:000001">
    <property type="entry name" value="Hydroxylamine reductase"/>
    <property type="match status" value="1"/>
</dbReference>
<dbReference type="FunFam" id="1.20.1270.20:FF:000002">
    <property type="entry name" value="Hydroxylamine reductase"/>
    <property type="match status" value="1"/>
</dbReference>
<dbReference type="FunFam" id="3.40.50.2030:FF:000001">
    <property type="entry name" value="Hydroxylamine reductase"/>
    <property type="match status" value="1"/>
</dbReference>
<dbReference type="FunFam" id="3.40.50.2030:FF:000002">
    <property type="entry name" value="Hydroxylamine reductase"/>
    <property type="match status" value="1"/>
</dbReference>
<dbReference type="Gene3D" id="1.20.1270.20">
    <property type="match status" value="2"/>
</dbReference>
<dbReference type="Gene3D" id="3.40.50.2030">
    <property type="match status" value="2"/>
</dbReference>
<dbReference type="HAMAP" id="MF_00069">
    <property type="entry name" value="Hydroxylam_reduct"/>
    <property type="match status" value="1"/>
</dbReference>
<dbReference type="InterPro" id="IPR004137">
    <property type="entry name" value="HCP/CODH"/>
</dbReference>
<dbReference type="InterPro" id="IPR010048">
    <property type="entry name" value="Hydroxylam_reduct"/>
</dbReference>
<dbReference type="InterPro" id="IPR016099">
    <property type="entry name" value="Prismane-like_a/b-sand"/>
</dbReference>
<dbReference type="InterPro" id="IPR011254">
    <property type="entry name" value="Prismane-like_sf"/>
</dbReference>
<dbReference type="InterPro" id="IPR016100">
    <property type="entry name" value="Prismane_a-bundle"/>
</dbReference>
<dbReference type="NCBIfam" id="TIGR01703">
    <property type="entry name" value="hybrid_clust"/>
    <property type="match status" value="1"/>
</dbReference>
<dbReference type="NCBIfam" id="NF003658">
    <property type="entry name" value="PRK05290.1"/>
    <property type="match status" value="1"/>
</dbReference>
<dbReference type="PANTHER" id="PTHR30109">
    <property type="entry name" value="HYDROXYLAMINE REDUCTASE"/>
    <property type="match status" value="1"/>
</dbReference>
<dbReference type="PANTHER" id="PTHR30109:SF0">
    <property type="entry name" value="HYDROXYLAMINE REDUCTASE"/>
    <property type="match status" value="1"/>
</dbReference>
<dbReference type="Pfam" id="PF03063">
    <property type="entry name" value="Prismane"/>
    <property type="match status" value="1"/>
</dbReference>
<dbReference type="PIRSF" id="PIRSF000076">
    <property type="entry name" value="HCP"/>
    <property type="match status" value="1"/>
</dbReference>
<dbReference type="SUPFAM" id="SSF56821">
    <property type="entry name" value="Prismane protein-like"/>
    <property type="match status" value="1"/>
</dbReference>
<keyword id="KW-0001">2Fe-2S</keyword>
<keyword id="KW-0963">Cytoplasm</keyword>
<keyword id="KW-0408">Iron</keyword>
<keyword id="KW-0411">Iron-sulfur</keyword>
<keyword id="KW-0479">Metal-binding</keyword>
<keyword id="KW-0560">Oxidoreductase</keyword>
<reference key="1">
    <citation type="journal article" date="2006" name="Mol. Microbiol.">
        <title>Role of pathogenicity island-associated integrases in the genome plasticity of uropathogenic Escherichia coli strain 536.</title>
        <authorList>
            <person name="Hochhut B."/>
            <person name="Wilde C."/>
            <person name="Balling G."/>
            <person name="Middendorf B."/>
            <person name="Dobrindt U."/>
            <person name="Brzuszkiewicz E."/>
            <person name="Gottschalk G."/>
            <person name="Carniel E."/>
            <person name="Hacker J."/>
        </authorList>
    </citation>
    <scope>NUCLEOTIDE SEQUENCE [LARGE SCALE GENOMIC DNA]</scope>
    <source>
        <strain>536 / UPEC</strain>
    </source>
</reference>
<evidence type="ECO:0000255" key="1">
    <source>
        <dbReference type="HAMAP-Rule" id="MF_00069"/>
    </source>
</evidence>
<gene>
    <name evidence="1" type="primary">hcp</name>
    <name type="ordered locus">ECP_0888</name>
</gene>
<name>HCP_ECOL5</name>
<sequence length="550" mass="60110">MFCVQCEQTIRTPAGNGCSYAQGMCGKTAETSDLQDLLIATLQGLSAWAVKAREYGIINHDVDSFAPRAFFSTLTNVNFDSPRIVGYAREAIALREALKAQCLAVDANARVDNPMADLQLMSDDLGELQRQAAEFTPNKDKAAIGENILGLRLLCLYGLKGAAAYMEHAHVLGQYDNDIYAQYHKIMAWLGTWPADMNALLECSMEIGQMNFKVMSILDAGETGKYGHPTPTQVNVKATAGKCILISGHDLKDLYNLLEQTEGTGVNVYTHGEMLPAHGYPELRKFKHLVGNYGSGWQNQQVEFARFPGPIVMTSNCIIDPTVGAYDDRIWTRSIVGWPGVRHLDGEDFSAVIAQAQQMAGFPYSEIPHLITVGFGRQTLLGAADTLIDLVSREKLRHIFLLGGCDGARGERHYFTDFATSVPDDCLILTLACGKYRFNKLEFGDIEGLPRLVDAGQCNDAYSAIILAVTLAEKLGCGVNDLPLSLVLSWFEQKAIVILLTLLSLGVKNIVTGPTAPGFLTPDLLAVLNEKFGLRSITTVEEDMKQLLSA</sequence>